<organism>
    <name type="scientific">Drosophila melanogaster</name>
    <name type="common">Fruit fly</name>
    <dbReference type="NCBI Taxonomy" id="7227"/>
    <lineage>
        <taxon>Eukaryota</taxon>
        <taxon>Metazoa</taxon>
        <taxon>Ecdysozoa</taxon>
        <taxon>Arthropoda</taxon>
        <taxon>Hexapoda</taxon>
        <taxon>Insecta</taxon>
        <taxon>Pterygota</taxon>
        <taxon>Neoptera</taxon>
        <taxon>Endopterygota</taxon>
        <taxon>Diptera</taxon>
        <taxon>Brachycera</taxon>
        <taxon>Muscomorpha</taxon>
        <taxon>Ephydroidea</taxon>
        <taxon>Drosophilidae</taxon>
        <taxon>Drosophila</taxon>
        <taxon>Sophophora</taxon>
    </lineage>
</organism>
<dbReference type="EMBL" id="AE014297">
    <property type="protein sequence ID" value="AAF51916.2"/>
    <property type="molecule type" value="Genomic_DNA"/>
</dbReference>
<dbReference type="EMBL" id="AY071086">
    <property type="protein sequence ID" value="AAL48708.1"/>
    <property type="molecule type" value="mRNA"/>
</dbReference>
<dbReference type="RefSeq" id="NP_731045.1">
    <property type="nucleotide sequence ID" value="NM_169127.3"/>
</dbReference>
<dbReference type="SMR" id="Q9VNL4"/>
<dbReference type="BioGRID" id="65953">
    <property type="interactions" value="8"/>
</dbReference>
<dbReference type="FunCoup" id="Q9VNL4">
    <property type="interactions" value="11"/>
</dbReference>
<dbReference type="IntAct" id="Q9VNL4">
    <property type="interactions" value="7"/>
</dbReference>
<dbReference type="STRING" id="7227.FBpp0078265"/>
<dbReference type="PaxDb" id="7227-FBpp0078265"/>
<dbReference type="DNASU" id="40749"/>
<dbReference type="EnsemblMetazoa" id="FBtr0078616">
    <property type="protein sequence ID" value="FBpp0078265"/>
    <property type="gene ID" value="FBgn0051559"/>
</dbReference>
<dbReference type="GeneID" id="40749"/>
<dbReference type="KEGG" id="dme:Dmel_CG31559"/>
<dbReference type="UCSC" id="CG31559-RA">
    <property type="organism name" value="d. melanogaster"/>
</dbReference>
<dbReference type="AGR" id="FB:FBgn0051559"/>
<dbReference type="FlyBase" id="FBgn0051559">
    <property type="gene designation" value="CG31559"/>
</dbReference>
<dbReference type="VEuPathDB" id="VectorBase:FBgn0051559"/>
<dbReference type="eggNOG" id="KOG2824">
    <property type="taxonomic scope" value="Eukaryota"/>
</dbReference>
<dbReference type="GeneTree" id="ENSGT00940000171068"/>
<dbReference type="HOGENOM" id="CLU_661017_0_0_1"/>
<dbReference type="InParanoid" id="Q9VNL4"/>
<dbReference type="OMA" id="INEHENF"/>
<dbReference type="OrthoDB" id="423313at2759"/>
<dbReference type="PhylomeDB" id="Q9VNL4"/>
<dbReference type="BioGRID-ORCS" id="40749">
    <property type="hits" value="0 hits in 3 CRISPR screens"/>
</dbReference>
<dbReference type="GenomeRNAi" id="40749"/>
<dbReference type="PRO" id="PR:Q9VNL4"/>
<dbReference type="Proteomes" id="UP000000803">
    <property type="component" value="Chromosome 3R"/>
</dbReference>
<dbReference type="Bgee" id="FBgn0051559">
    <property type="expression patterns" value="Expressed in dorsal appendage forming follicle cell in ovary and 11 other cell types or tissues"/>
</dbReference>
<dbReference type="GO" id="GO:0007605">
    <property type="term" value="P:sensory perception of sound"/>
    <property type="evidence" value="ECO:0007669"/>
    <property type="project" value="InterPro"/>
</dbReference>
<dbReference type="CDD" id="cd03031">
    <property type="entry name" value="GRX_GRX_like"/>
    <property type="match status" value="1"/>
</dbReference>
<dbReference type="Gene3D" id="3.40.30.10">
    <property type="entry name" value="Glutaredoxin"/>
    <property type="match status" value="1"/>
</dbReference>
<dbReference type="InterPro" id="IPR002109">
    <property type="entry name" value="Glutaredoxin"/>
</dbReference>
<dbReference type="InterPro" id="IPR042797">
    <property type="entry name" value="GRXCR1"/>
</dbReference>
<dbReference type="InterPro" id="IPR036249">
    <property type="entry name" value="Thioredoxin-like_sf"/>
</dbReference>
<dbReference type="PANTHER" id="PTHR46990">
    <property type="entry name" value="GLUTAREDOXIN DOMAIN-CONTAINING CYSTEINE-RICH PROTEIN 1"/>
    <property type="match status" value="1"/>
</dbReference>
<dbReference type="PANTHER" id="PTHR46990:SF1">
    <property type="entry name" value="GLUTAREDOXIN DOMAIN-CONTAINING CYSTEINE-RICH PROTEIN 1"/>
    <property type="match status" value="1"/>
</dbReference>
<dbReference type="Pfam" id="PF00462">
    <property type="entry name" value="Glutaredoxin"/>
    <property type="match status" value="1"/>
</dbReference>
<dbReference type="Pfam" id="PF23733">
    <property type="entry name" value="GRXCR1-2_C"/>
    <property type="match status" value="1"/>
</dbReference>
<dbReference type="SUPFAM" id="SSF52833">
    <property type="entry name" value="Thioredoxin-like"/>
    <property type="match status" value="1"/>
</dbReference>
<dbReference type="PROSITE" id="PS51354">
    <property type="entry name" value="GLUTAREDOXIN_2"/>
    <property type="match status" value="1"/>
</dbReference>
<feature type="chain" id="PRO_0000349193" description="Glutaredoxin domain-containing cysteine-rich protein CG31559">
    <location>
        <begin position="1"/>
        <end position="454"/>
    </location>
</feature>
<feature type="domain" description="Glutaredoxin" evidence="1">
    <location>
        <begin position="295"/>
        <end position="400"/>
    </location>
</feature>
<feature type="region of interest" description="Disordered" evidence="2">
    <location>
        <begin position="30"/>
        <end position="88"/>
    </location>
</feature>
<feature type="region of interest" description="Disordered" evidence="2">
    <location>
        <begin position="217"/>
        <end position="239"/>
    </location>
</feature>
<feature type="compositionally biased region" description="Polar residues" evidence="2">
    <location>
        <begin position="33"/>
        <end position="45"/>
    </location>
</feature>
<feature type="compositionally biased region" description="Low complexity" evidence="2">
    <location>
        <begin position="58"/>
        <end position="69"/>
    </location>
</feature>
<feature type="compositionally biased region" description="Polar residues" evidence="2">
    <location>
        <begin position="70"/>
        <end position="84"/>
    </location>
</feature>
<feature type="compositionally biased region" description="Basic and acidic residues" evidence="2">
    <location>
        <begin position="217"/>
        <end position="227"/>
    </location>
</feature>
<keyword id="KW-1185">Reference proteome</keyword>
<proteinExistence type="evidence at transcript level"/>
<accession>Q9VNL4</accession>
<accession>Q8SZ66</accession>
<protein>
    <recommendedName>
        <fullName>Glutaredoxin domain-containing cysteine-rich protein CG31559</fullName>
    </recommendedName>
</protein>
<gene>
    <name type="ORF">CG31559</name>
</gene>
<reference key="1">
    <citation type="journal article" date="2000" name="Science">
        <title>The genome sequence of Drosophila melanogaster.</title>
        <authorList>
            <person name="Adams M.D."/>
            <person name="Celniker S.E."/>
            <person name="Holt R.A."/>
            <person name="Evans C.A."/>
            <person name="Gocayne J.D."/>
            <person name="Amanatides P.G."/>
            <person name="Scherer S.E."/>
            <person name="Li P.W."/>
            <person name="Hoskins R.A."/>
            <person name="Galle R.F."/>
            <person name="George R.A."/>
            <person name="Lewis S.E."/>
            <person name="Richards S."/>
            <person name="Ashburner M."/>
            <person name="Henderson S.N."/>
            <person name="Sutton G.G."/>
            <person name="Wortman J.R."/>
            <person name="Yandell M.D."/>
            <person name="Zhang Q."/>
            <person name="Chen L.X."/>
            <person name="Brandon R.C."/>
            <person name="Rogers Y.-H.C."/>
            <person name="Blazej R.G."/>
            <person name="Champe M."/>
            <person name="Pfeiffer B.D."/>
            <person name="Wan K.H."/>
            <person name="Doyle C."/>
            <person name="Baxter E.G."/>
            <person name="Helt G."/>
            <person name="Nelson C.R."/>
            <person name="Miklos G.L.G."/>
            <person name="Abril J.F."/>
            <person name="Agbayani A."/>
            <person name="An H.-J."/>
            <person name="Andrews-Pfannkoch C."/>
            <person name="Baldwin D."/>
            <person name="Ballew R.M."/>
            <person name="Basu A."/>
            <person name="Baxendale J."/>
            <person name="Bayraktaroglu L."/>
            <person name="Beasley E.M."/>
            <person name="Beeson K.Y."/>
            <person name="Benos P.V."/>
            <person name="Berman B.P."/>
            <person name="Bhandari D."/>
            <person name="Bolshakov S."/>
            <person name="Borkova D."/>
            <person name="Botchan M.R."/>
            <person name="Bouck J."/>
            <person name="Brokstein P."/>
            <person name="Brottier P."/>
            <person name="Burtis K.C."/>
            <person name="Busam D.A."/>
            <person name="Butler H."/>
            <person name="Cadieu E."/>
            <person name="Center A."/>
            <person name="Chandra I."/>
            <person name="Cherry J.M."/>
            <person name="Cawley S."/>
            <person name="Dahlke C."/>
            <person name="Davenport L.B."/>
            <person name="Davies P."/>
            <person name="de Pablos B."/>
            <person name="Delcher A."/>
            <person name="Deng Z."/>
            <person name="Mays A.D."/>
            <person name="Dew I."/>
            <person name="Dietz S.M."/>
            <person name="Dodson K."/>
            <person name="Doup L.E."/>
            <person name="Downes M."/>
            <person name="Dugan-Rocha S."/>
            <person name="Dunkov B.C."/>
            <person name="Dunn P."/>
            <person name="Durbin K.J."/>
            <person name="Evangelista C.C."/>
            <person name="Ferraz C."/>
            <person name="Ferriera S."/>
            <person name="Fleischmann W."/>
            <person name="Fosler C."/>
            <person name="Gabrielian A.E."/>
            <person name="Garg N.S."/>
            <person name="Gelbart W.M."/>
            <person name="Glasser K."/>
            <person name="Glodek A."/>
            <person name="Gong F."/>
            <person name="Gorrell J.H."/>
            <person name="Gu Z."/>
            <person name="Guan P."/>
            <person name="Harris M."/>
            <person name="Harris N.L."/>
            <person name="Harvey D.A."/>
            <person name="Heiman T.J."/>
            <person name="Hernandez J.R."/>
            <person name="Houck J."/>
            <person name="Hostin D."/>
            <person name="Houston K.A."/>
            <person name="Howland T.J."/>
            <person name="Wei M.-H."/>
            <person name="Ibegwam C."/>
            <person name="Jalali M."/>
            <person name="Kalush F."/>
            <person name="Karpen G.H."/>
            <person name="Ke Z."/>
            <person name="Kennison J.A."/>
            <person name="Ketchum K.A."/>
            <person name="Kimmel B.E."/>
            <person name="Kodira C.D."/>
            <person name="Kraft C.L."/>
            <person name="Kravitz S."/>
            <person name="Kulp D."/>
            <person name="Lai Z."/>
            <person name="Lasko P."/>
            <person name="Lei Y."/>
            <person name="Levitsky A.A."/>
            <person name="Li J.H."/>
            <person name="Li Z."/>
            <person name="Liang Y."/>
            <person name="Lin X."/>
            <person name="Liu X."/>
            <person name="Mattei B."/>
            <person name="McIntosh T.C."/>
            <person name="McLeod M.P."/>
            <person name="McPherson D."/>
            <person name="Merkulov G."/>
            <person name="Milshina N.V."/>
            <person name="Mobarry C."/>
            <person name="Morris J."/>
            <person name="Moshrefi A."/>
            <person name="Mount S.M."/>
            <person name="Moy M."/>
            <person name="Murphy B."/>
            <person name="Murphy L."/>
            <person name="Muzny D.M."/>
            <person name="Nelson D.L."/>
            <person name="Nelson D.R."/>
            <person name="Nelson K.A."/>
            <person name="Nixon K."/>
            <person name="Nusskern D.R."/>
            <person name="Pacleb J.M."/>
            <person name="Palazzolo M."/>
            <person name="Pittman G.S."/>
            <person name="Pan S."/>
            <person name="Pollard J."/>
            <person name="Puri V."/>
            <person name="Reese M.G."/>
            <person name="Reinert K."/>
            <person name="Remington K."/>
            <person name="Saunders R.D.C."/>
            <person name="Scheeler F."/>
            <person name="Shen H."/>
            <person name="Shue B.C."/>
            <person name="Siden-Kiamos I."/>
            <person name="Simpson M."/>
            <person name="Skupski M.P."/>
            <person name="Smith T.J."/>
            <person name="Spier E."/>
            <person name="Spradling A.C."/>
            <person name="Stapleton M."/>
            <person name="Strong R."/>
            <person name="Sun E."/>
            <person name="Svirskas R."/>
            <person name="Tector C."/>
            <person name="Turner R."/>
            <person name="Venter E."/>
            <person name="Wang A.H."/>
            <person name="Wang X."/>
            <person name="Wang Z.-Y."/>
            <person name="Wassarman D.A."/>
            <person name="Weinstock G.M."/>
            <person name="Weissenbach J."/>
            <person name="Williams S.M."/>
            <person name="Woodage T."/>
            <person name="Worley K.C."/>
            <person name="Wu D."/>
            <person name="Yang S."/>
            <person name="Yao Q.A."/>
            <person name="Ye J."/>
            <person name="Yeh R.-F."/>
            <person name="Zaveri J.S."/>
            <person name="Zhan M."/>
            <person name="Zhang G."/>
            <person name="Zhao Q."/>
            <person name="Zheng L."/>
            <person name="Zheng X.H."/>
            <person name="Zhong F.N."/>
            <person name="Zhong W."/>
            <person name="Zhou X."/>
            <person name="Zhu S.C."/>
            <person name="Zhu X."/>
            <person name="Smith H.O."/>
            <person name="Gibbs R.A."/>
            <person name="Myers E.W."/>
            <person name="Rubin G.M."/>
            <person name="Venter J.C."/>
        </authorList>
    </citation>
    <scope>NUCLEOTIDE SEQUENCE [LARGE SCALE GENOMIC DNA]</scope>
    <source>
        <strain>Berkeley</strain>
    </source>
</reference>
<reference key="2">
    <citation type="journal article" date="2002" name="Genome Biol.">
        <title>Annotation of the Drosophila melanogaster euchromatic genome: a systematic review.</title>
        <authorList>
            <person name="Misra S."/>
            <person name="Crosby M.A."/>
            <person name="Mungall C.J."/>
            <person name="Matthews B.B."/>
            <person name="Campbell K.S."/>
            <person name="Hradecky P."/>
            <person name="Huang Y."/>
            <person name="Kaminker J.S."/>
            <person name="Millburn G.H."/>
            <person name="Prochnik S.E."/>
            <person name="Smith C.D."/>
            <person name="Tupy J.L."/>
            <person name="Whitfield E.J."/>
            <person name="Bayraktaroglu L."/>
            <person name="Berman B.P."/>
            <person name="Bettencourt B.R."/>
            <person name="Celniker S.E."/>
            <person name="de Grey A.D.N.J."/>
            <person name="Drysdale R.A."/>
            <person name="Harris N.L."/>
            <person name="Richter J."/>
            <person name="Russo S."/>
            <person name="Schroeder A.J."/>
            <person name="Shu S.Q."/>
            <person name="Stapleton M."/>
            <person name="Yamada C."/>
            <person name="Ashburner M."/>
            <person name="Gelbart W.M."/>
            <person name="Rubin G.M."/>
            <person name="Lewis S.E."/>
        </authorList>
    </citation>
    <scope>GENOME REANNOTATION</scope>
    <source>
        <strain>Berkeley</strain>
    </source>
</reference>
<reference key="3">
    <citation type="submission" date="2001-12" db="EMBL/GenBank/DDBJ databases">
        <authorList>
            <person name="Stapleton M."/>
            <person name="Brokstein P."/>
            <person name="Hong L."/>
            <person name="Agbayani A."/>
            <person name="Carlson J.W."/>
            <person name="Champe M."/>
            <person name="Chavez C."/>
            <person name="Dorsett V."/>
            <person name="Dresnek D."/>
            <person name="Farfan D."/>
            <person name="Frise E."/>
            <person name="George R.A."/>
            <person name="Gonzalez M."/>
            <person name="Guarin H."/>
            <person name="Kronmiller B."/>
            <person name="Li P.W."/>
            <person name="Liao G."/>
            <person name="Miranda A."/>
            <person name="Mungall C.J."/>
            <person name="Nunoo J."/>
            <person name="Pacleb J.M."/>
            <person name="Paragas V."/>
            <person name="Park S."/>
            <person name="Patel S."/>
            <person name="Phouanenavong S."/>
            <person name="Wan K.H."/>
            <person name="Yu C."/>
            <person name="Lewis S.E."/>
            <person name="Rubin G.M."/>
            <person name="Celniker S.E."/>
        </authorList>
    </citation>
    <scope>NUCLEOTIDE SEQUENCE [LARGE SCALE MRNA]</scope>
    <source>
        <strain>Berkeley</strain>
        <tissue>Embryo</tissue>
    </source>
</reference>
<name>GRCR1_DROME</name>
<sequence length="454" mass="50164">MVLATPPVSKGGNAGGLFMDQYQQYAAHCETADSGNGSDLESTGLPTKPDDSEESGPSSLGSDSMHGSSTEYVRQSASQPSGQRQRQKSLRVLGALLPDSLLRDIRDRRSTEYVVQFSQPEDEEKIQVPDKIPEKPSPFRLARESLSEDKIEELRAAVERANFVQTGEETLDSIDATSQSLPASSNIGGHRGNINYKYADDQYYSFHINEHENFGARSARSGDEADHSTGAGSEAGSDSGILTEQQDLFAGYRDVRCGASSTQSTIRSAKGTVRGVKNRVRNGIATFLQLQQQPNAKNFKEKDLGKVVLYTTSMGIIRETYTKCANVKQILRTLLVKFEERDVFMSVEYQAEMRQRMQSGQVRVPQLYVEGQHIGDAETVERMNESGELRQLLKPYKSMASTYTCQTCGGYRLLPCPSCNGSKKSVHRNHFTAEFVALKCMNCDEVGLVKCHNC</sequence>
<evidence type="ECO:0000255" key="1">
    <source>
        <dbReference type="PROSITE-ProRule" id="PRU00686"/>
    </source>
</evidence>
<evidence type="ECO:0000256" key="2">
    <source>
        <dbReference type="SAM" id="MobiDB-lite"/>
    </source>
</evidence>
<evidence type="ECO:0000305" key="3"/>
<comment type="similarity">
    <text evidence="3">Belongs to the GRXCR1 family.</text>
</comment>